<evidence type="ECO:0000255" key="1">
    <source>
        <dbReference type="HAMAP-Rule" id="MF_00418"/>
    </source>
</evidence>
<evidence type="ECO:0000305" key="2"/>
<comment type="function">
    <text evidence="1">Catalyzes the condensation of (S)-aspartate-beta-semialdehyde [(S)-ASA] and pyruvate to 4-hydroxy-tetrahydrodipicolinate (HTPA).</text>
</comment>
<comment type="catalytic activity">
    <reaction evidence="1">
        <text>L-aspartate 4-semialdehyde + pyruvate = (2S,4S)-4-hydroxy-2,3,4,5-tetrahydrodipicolinate + H2O + H(+)</text>
        <dbReference type="Rhea" id="RHEA:34171"/>
        <dbReference type="ChEBI" id="CHEBI:15361"/>
        <dbReference type="ChEBI" id="CHEBI:15377"/>
        <dbReference type="ChEBI" id="CHEBI:15378"/>
        <dbReference type="ChEBI" id="CHEBI:67139"/>
        <dbReference type="ChEBI" id="CHEBI:537519"/>
        <dbReference type="EC" id="4.3.3.7"/>
    </reaction>
</comment>
<comment type="pathway">
    <text evidence="1">Amino-acid biosynthesis; L-lysine biosynthesis via DAP pathway; (S)-tetrahydrodipicolinate from L-aspartate: step 3/4.</text>
</comment>
<comment type="subunit">
    <text evidence="1">Homotetramer; dimer of dimers.</text>
</comment>
<comment type="subcellular location">
    <subcellularLocation>
        <location evidence="1">Cytoplasm</location>
    </subcellularLocation>
</comment>
<comment type="similarity">
    <text evidence="1">Belongs to the DapA family.</text>
</comment>
<comment type="caution">
    <text evidence="2">Was originally thought to be a dihydrodipicolinate synthase (DHDPS), catalyzing the condensation of (S)-aspartate-beta-semialdehyde [(S)-ASA] and pyruvate to dihydrodipicolinate (DHDP). However, it was shown in E.coli that the product of the enzymatic reaction is not dihydrodipicolinate but in fact (4S)-4-hydroxy-2,3,4,5-tetrahydro-(2S)-dipicolinic acid (HTPA), and that the consecutive dehydration reaction leading to DHDP is not spontaneous but catalyzed by DapB.</text>
</comment>
<protein>
    <recommendedName>
        <fullName evidence="1">4-hydroxy-tetrahydrodipicolinate synthase</fullName>
        <shortName evidence="1">HTPA synthase</shortName>
        <ecNumber evidence="1">4.3.3.7</ecNumber>
    </recommendedName>
</protein>
<gene>
    <name evidence="1" type="primary">dapA</name>
    <name type="ordered locus">Shewmr4_2340</name>
</gene>
<accession>Q0HHQ6</accession>
<reference key="1">
    <citation type="submission" date="2006-08" db="EMBL/GenBank/DDBJ databases">
        <title>Complete sequence of Shewanella sp. MR-4.</title>
        <authorList>
            <consortium name="US DOE Joint Genome Institute"/>
            <person name="Copeland A."/>
            <person name="Lucas S."/>
            <person name="Lapidus A."/>
            <person name="Barry K."/>
            <person name="Detter J.C."/>
            <person name="Glavina del Rio T."/>
            <person name="Hammon N."/>
            <person name="Israni S."/>
            <person name="Dalin E."/>
            <person name="Tice H."/>
            <person name="Pitluck S."/>
            <person name="Kiss H."/>
            <person name="Brettin T."/>
            <person name="Bruce D."/>
            <person name="Han C."/>
            <person name="Tapia R."/>
            <person name="Gilna P."/>
            <person name="Schmutz J."/>
            <person name="Larimer F."/>
            <person name="Land M."/>
            <person name="Hauser L."/>
            <person name="Kyrpides N."/>
            <person name="Mikhailova N."/>
            <person name="Nealson K."/>
            <person name="Konstantinidis K."/>
            <person name="Klappenbach J."/>
            <person name="Tiedje J."/>
            <person name="Richardson P."/>
        </authorList>
    </citation>
    <scope>NUCLEOTIDE SEQUENCE [LARGE SCALE GENOMIC DNA]</scope>
    <source>
        <strain>MR-4</strain>
    </source>
</reference>
<keyword id="KW-0028">Amino-acid biosynthesis</keyword>
<keyword id="KW-0963">Cytoplasm</keyword>
<keyword id="KW-0220">Diaminopimelate biosynthesis</keyword>
<keyword id="KW-0456">Lyase</keyword>
<keyword id="KW-0457">Lysine biosynthesis</keyword>
<keyword id="KW-0704">Schiff base</keyword>
<dbReference type="EC" id="4.3.3.7" evidence="1"/>
<dbReference type="EMBL" id="CP000446">
    <property type="protein sequence ID" value="ABI39411.1"/>
    <property type="molecule type" value="Genomic_DNA"/>
</dbReference>
<dbReference type="RefSeq" id="WP_011623101.1">
    <property type="nucleotide sequence ID" value="NC_008321.1"/>
</dbReference>
<dbReference type="SMR" id="Q0HHQ6"/>
<dbReference type="KEGG" id="she:Shewmr4_2340"/>
<dbReference type="HOGENOM" id="CLU_049343_7_1_6"/>
<dbReference type="UniPathway" id="UPA00034">
    <property type="reaction ID" value="UER00017"/>
</dbReference>
<dbReference type="GO" id="GO:0005829">
    <property type="term" value="C:cytosol"/>
    <property type="evidence" value="ECO:0007669"/>
    <property type="project" value="TreeGrafter"/>
</dbReference>
<dbReference type="GO" id="GO:0008840">
    <property type="term" value="F:4-hydroxy-tetrahydrodipicolinate synthase activity"/>
    <property type="evidence" value="ECO:0007669"/>
    <property type="project" value="UniProtKB-UniRule"/>
</dbReference>
<dbReference type="GO" id="GO:0019877">
    <property type="term" value="P:diaminopimelate biosynthetic process"/>
    <property type="evidence" value="ECO:0007669"/>
    <property type="project" value="UniProtKB-UniRule"/>
</dbReference>
<dbReference type="GO" id="GO:0009089">
    <property type="term" value="P:lysine biosynthetic process via diaminopimelate"/>
    <property type="evidence" value="ECO:0007669"/>
    <property type="project" value="UniProtKB-UniRule"/>
</dbReference>
<dbReference type="CDD" id="cd00950">
    <property type="entry name" value="DHDPS"/>
    <property type="match status" value="1"/>
</dbReference>
<dbReference type="Gene3D" id="3.20.20.70">
    <property type="entry name" value="Aldolase class I"/>
    <property type="match status" value="1"/>
</dbReference>
<dbReference type="HAMAP" id="MF_00418">
    <property type="entry name" value="DapA"/>
    <property type="match status" value="1"/>
</dbReference>
<dbReference type="InterPro" id="IPR013785">
    <property type="entry name" value="Aldolase_TIM"/>
</dbReference>
<dbReference type="InterPro" id="IPR005263">
    <property type="entry name" value="DapA"/>
</dbReference>
<dbReference type="InterPro" id="IPR002220">
    <property type="entry name" value="DapA-like"/>
</dbReference>
<dbReference type="InterPro" id="IPR020625">
    <property type="entry name" value="Schiff_base-form_aldolases_AS"/>
</dbReference>
<dbReference type="InterPro" id="IPR020624">
    <property type="entry name" value="Schiff_base-form_aldolases_CS"/>
</dbReference>
<dbReference type="NCBIfam" id="TIGR00674">
    <property type="entry name" value="dapA"/>
    <property type="match status" value="1"/>
</dbReference>
<dbReference type="PANTHER" id="PTHR12128:SF66">
    <property type="entry name" value="4-HYDROXY-2-OXOGLUTARATE ALDOLASE, MITOCHONDRIAL"/>
    <property type="match status" value="1"/>
</dbReference>
<dbReference type="PANTHER" id="PTHR12128">
    <property type="entry name" value="DIHYDRODIPICOLINATE SYNTHASE"/>
    <property type="match status" value="1"/>
</dbReference>
<dbReference type="Pfam" id="PF00701">
    <property type="entry name" value="DHDPS"/>
    <property type="match status" value="1"/>
</dbReference>
<dbReference type="PIRSF" id="PIRSF001365">
    <property type="entry name" value="DHDPS"/>
    <property type="match status" value="1"/>
</dbReference>
<dbReference type="PRINTS" id="PR00146">
    <property type="entry name" value="DHPICSNTHASE"/>
</dbReference>
<dbReference type="SMART" id="SM01130">
    <property type="entry name" value="DHDPS"/>
    <property type="match status" value="1"/>
</dbReference>
<dbReference type="SUPFAM" id="SSF51569">
    <property type="entry name" value="Aldolase"/>
    <property type="match status" value="1"/>
</dbReference>
<dbReference type="PROSITE" id="PS00665">
    <property type="entry name" value="DHDPS_1"/>
    <property type="match status" value="1"/>
</dbReference>
<dbReference type="PROSITE" id="PS00666">
    <property type="entry name" value="DHDPS_2"/>
    <property type="match status" value="1"/>
</dbReference>
<organism>
    <name type="scientific">Shewanella sp. (strain MR-4)</name>
    <dbReference type="NCBI Taxonomy" id="60480"/>
    <lineage>
        <taxon>Bacteria</taxon>
        <taxon>Pseudomonadati</taxon>
        <taxon>Pseudomonadota</taxon>
        <taxon>Gammaproteobacteria</taxon>
        <taxon>Alteromonadales</taxon>
        <taxon>Shewanellaceae</taxon>
        <taxon>Shewanella</taxon>
    </lineage>
</organism>
<feature type="chain" id="PRO_1000050268" description="4-hydroxy-tetrahydrodipicolinate synthase">
    <location>
        <begin position="1"/>
        <end position="294"/>
    </location>
</feature>
<feature type="active site" description="Proton donor/acceptor" evidence="1">
    <location>
        <position position="133"/>
    </location>
</feature>
<feature type="active site" description="Schiff-base intermediate with substrate" evidence="1">
    <location>
        <position position="161"/>
    </location>
</feature>
<feature type="binding site" evidence="1">
    <location>
        <position position="45"/>
    </location>
    <ligand>
        <name>pyruvate</name>
        <dbReference type="ChEBI" id="CHEBI:15361"/>
    </ligand>
</feature>
<feature type="binding site" evidence="1">
    <location>
        <position position="203"/>
    </location>
    <ligand>
        <name>pyruvate</name>
        <dbReference type="ChEBI" id="CHEBI:15361"/>
    </ligand>
</feature>
<feature type="site" description="Part of a proton relay during catalysis" evidence="1">
    <location>
        <position position="44"/>
    </location>
</feature>
<feature type="site" description="Part of a proton relay during catalysis" evidence="1">
    <location>
        <position position="107"/>
    </location>
</feature>
<proteinExistence type="inferred from homology"/>
<sequence length="294" mass="31000">MINGSIVALITPMNSDGSVDFASLERLVEFHIDQGTDAIVAVGTTGESATLPMNEHVTVVAQTVKFAAGRIPVIGGNGANATSEAIELTKSLSKVGVAAMLGVTPYYNKPTPKGLVAHYKAVAASTDIPQILYNVPGRTAVDMKPETVAELVGVSNIIGVKEATGDVSRVKRLRELCGNDFMLYSGDDATAREFLLLGGNGVISVANNIVPKAFKAMCDAALAGNAELAASIDEPLRGLYTTLFCEANPIPVKWAAHRMGLIECGHIRLPLTELSEQCHGLLLDAMTRAQIEVK</sequence>
<name>DAPA_SHESM</name>